<name>GLNE_RHILO</name>
<accession>Q985F6</accession>
<sequence length="986" mass="107857">MAAVAKRTVTDWQLKPALGLAPLDQGRARQELAEIAAAAREEGLARLAKFLAGKGAGQDFLAAVFDLSPFLRDTSRRRPRILDALFDQPVEARLEAITAAIEQAPLAETVSESSLMMELRQCKAEAHFLIALADLAGEAETSLTVRRLSDLADACTRAAVDFLLRDAHGQGKLKLPDLDNPSLQSGWILLGMGKLGAHELNFSSDIDLVVFFDPDAPAVVDRLDATELFSRLTRRLVRILQDRTEHGYVFRTDLRLRPDPGSTPLAIPVEAALRYYEARGQNWERAAMIKARPVAGDLAAGAAFLRELQPYIWRKYMDYAAIADVHSIKRQIHAHKGHGEIAVKGHNVKLGRGGIREIEFFVQTQQLIAGGRFPELRGRETVPMLGQLAARGWITADARDALARQYWFLRRVEHAVQMVADEQTHTLPEDDEGLERIAHMLGFGDAAAFSQAFRASLLQVERHYAALFETAPELSAGIGNLVFTGDVDDPNTLQTLQGLGFQRPSDICRVIRGWHFGRYRVTQSAEARERLTELTPALLKAFGQTRRADEALIRFDEFLAGLPAGIQLFSLLQSNPALLKLMATIMGAAPRLAAIITRRPHVFDGLLDPALLTELPDRVYLSARLSAFLEGDRAYEEVLDRLRIFASEQKFLIGVRLLAGSIDPARAGRAFSDLADLTIEAALQAVTAEFAARHGTIAGGVVSLLGMGKLGSRELTAGSDVDLILLYDHDADAEDSDGDKPLAPSHYYTRMTQRLISAVSAPTAEGVLYELDLRLRPSGNKGPVATHIDAFKKYQRQEAWTWEHMALSRARAIGGDTGLCAEVEAEVAAVLGQPRDAAKVKTEAADMRAMIEKEKPARDLWDIKLIPGGLIDLEFIAQVAVITGQVGAGPRATGTAEILSRLAPGFADAGARQELGAAFALYLALTQMTRLCLTGSFERDDVPPGLSDLLLAVTDLPDFGVLEAHLKETSQKVRKDFDLLLRAGRP</sequence>
<protein>
    <recommendedName>
        <fullName evidence="1">Bifunctional glutamine synthetase adenylyltransferase/adenylyl-removing enzyme</fullName>
    </recommendedName>
    <alternativeName>
        <fullName evidence="1">ATP:glutamine synthetase adenylyltransferase</fullName>
    </alternativeName>
    <alternativeName>
        <fullName evidence="1">ATase</fullName>
    </alternativeName>
    <domain>
        <recommendedName>
            <fullName evidence="1">Glutamine synthetase adenylyl-L-tyrosine phosphorylase</fullName>
            <ecNumber evidence="1">2.7.7.89</ecNumber>
        </recommendedName>
        <alternativeName>
            <fullName evidence="1">Adenylyl removase</fullName>
            <shortName evidence="1">AR</shortName>
            <shortName evidence="1">AT-N</shortName>
        </alternativeName>
    </domain>
    <domain>
        <recommendedName>
            <fullName evidence="1">Glutamine synthetase adenylyl transferase</fullName>
            <ecNumber evidence="1">2.7.7.42</ecNumber>
        </recommendedName>
        <alternativeName>
            <fullName evidence="1">Adenylyl transferase</fullName>
            <shortName evidence="1">AT</shortName>
            <shortName evidence="1">AT-C</shortName>
        </alternativeName>
    </domain>
</protein>
<dbReference type="EC" id="2.7.7.89" evidence="1"/>
<dbReference type="EC" id="2.7.7.42" evidence="1"/>
<dbReference type="EMBL" id="BA000012">
    <property type="protein sequence ID" value="BAB54106.1"/>
    <property type="molecule type" value="Genomic_DNA"/>
</dbReference>
<dbReference type="RefSeq" id="WP_010915054.1">
    <property type="nucleotide sequence ID" value="NC_002678.2"/>
</dbReference>
<dbReference type="SMR" id="Q985F6"/>
<dbReference type="KEGG" id="mlo:mlr7698"/>
<dbReference type="PATRIC" id="fig|266835.9.peg.6160"/>
<dbReference type="eggNOG" id="COG1391">
    <property type="taxonomic scope" value="Bacteria"/>
</dbReference>
<dbReference type="HOGENOM" id="CLU_006233_0_0_5"/>
<dbReference type="Proteomes" id="UP000000552">
    <property type="component" value="Chromosome"/>
</dbReference>
<dbReference type="GO" id="GO:0005829">
    <property type="term" value="C:cytosol"/>
    <property type="evidence" value="ECO:0007669"/>
    <property type="project" value="TreeGrafter"/>
</dbReference>
<dbReference type="GO" id="GO:0008882">
    <property type="term" value="F:[glutamate-ammonia-ligase] adenylyltransferase activity"/>
    <property type="evidence" value="ECO:0007669"/>
    <property type="project" value="UniProtKB-UniRule"/>
</dbReference>
<dbReference type="GO" id="GO:0047388">
    <property type="term" value="F:[glutamine synthetase]-adenylyl-L-tyrosine phosphorylase activity"/>
    <property type="evidence" value="ECO:0007669"/>
    <property type="project" value="UniProtKB-EC"/>
</dbReference>
<dbReference type="GO" id="GO:0005524">
    <property type="term" value="F:ATP binding"/>
    <property type="evidence" value="ECO:0007669"/>
    <property type="project" value="UniProtKB-UniRule"/>
</dbReference>
<dbReference type="GO" id="GO:0003700">
    <property type="term" value="F:DNA-binding transcription factor activity"/>
    <property type="evidence" value="ECO:0007669"/>
    <property type="project" value="InterPro"/>
</dbReference>
<dbReference type="GO" id="GO:0000287">
    <property type="term" value="F:magnesium ion binding"/>
    <property type="evidence" value="ECO:0007669"/>
    <property type="project" value="UniProtKB-UniRule"/>
</dbReference>
<dbReference type="GO" id="GO:0043565">
    <property type="term" value="F:sequence-specific DNA binding"/>
    <property type="evidence" value="ECO:0007669"/>
    <property type="project" value="InterPro"/>
</dbReference>
<dbReference type="GO" id="GO:0000820">
    <property type="term" value="P:regulation of glutamine family amino acid metabolic process"/>
    <property type="evidence" value="ECO:0007669"/>
    <property type="project" value="UniProtKB-UniRule"/>
</dbReference>
<dbReference type="CDD" id="cd05401">
    <property type="entry name" value="NT_GlnE_GlnD_like"/>
    <property type="match status" value="2"/>
</dbReference>
<dbReference type="Gene3D" id="1.20.120.1510">
    <property type="match status" value="1"/>
</dbReference>
<dbReference type="Gene3D" id="3.30.460.10">
    <property type="entry name" value="Beta Polymerase, domain 2"/>
    <property type="match status" value="2"/>
</dbReference>
<dbReference type="Gene3D" id="1.20.120.330">
    <property type="entry name" value="Nucleotidyltransferases domain 2"/>
    <property type="match status" value="2"/>
</dbReference>
<dbReference type="HAMAP" id="MF_00802">
    <property type="entry name" value="GlnE"/>
    <property type="match status" value="1"/>
</dbReference>
<dbReference type="InterPro" id="IPR023057">
    <property type="entry name" value="GlnE"/>
</dbReference>
<dbReference type="InterPro" id="IPR005190">
    <property type="entry name" value="GlnE_rpt_dom"/>
</dbReference>
<dbReference type="InterPro" id="IPR018060">
    <property type="entry name" value="HTH_AraC"/>
</dbReference>
<dbReference type="InterPro" id="IPR043519">
    <property type="entry name" value="NT_sf"/>
</dbReference>
<dbReference type="InterPro" id="IPR013546">
    <property type="entry name" value="PII_UdlTrfase/GS_AdlTrfase"/>
</dbReference>
<dbReference type="NCBIfam" id="NF008292">
    <property type="entry name" value="PRK11072.1"/>
    <property type="match status" value="1"/>
</dbReference>
<dbReference type="NCBIfam" id="NF010706">
    <property type="entry name" value="PRK14108.1"/>
    <property type="match status" value="1"/>
</dbReference>
<dbReference type="PANTHER" id="PTHR30621:SF0">
    <property type="entry name" value="BIFUNCTIONAL GLUTAMINE SYNTHETASE ADENYLYLTRANSFERASE_ADENYLYL-REMOVING ENZYME"/>
    <property type="match status" value="1"/>
</dbReference>
<dbReference type="PANTHER" id="PTHR30621">
    <property type="entry name" value="GLUTAMINE SYNTHETASE ADENYLYLTRANSFERASE"/>
    <property type="match status" value="1"/>
</dbReference>
<dbReference type="Pfam" id="PF08335">
    <property type="entry name" value="GlnD_UR_UTase"/>
    <property type="match status" value="1"/>
</dbReference>
<dbReference type="Pfam" id="PF03710">
    <property type="entry name" value="GlnE"/>
    <property type="match status" value="2"/>
</dbReference>
<dbReference type="SUPFAM" id="SSF81301">
    <property type="entry name" value="Nucleotidyltransferase"/>
    <property type="match status" value="2"/>
</dbReference>
<dbReference type="SUPFAM" id="SSF81593">
    <property type="entry name" value="Nucleotidyltransferase substrate binding subunit/domain"/>
    <property type="match status" value="2"/>
</dbReference>
<gene>
    <name evidence="1" type="primary">glnE</name>
    <name type="ordered locus">mlr7698</name>
</gene>
<evidence type="ECO:0000255" key="1">
    <source>
        <dbReference type="HAMAP-Rule" id="MF_00802"/>
    </source>
</evidence>
<feature type="chain" id="PRO_0000209271" description="Bifunctional glutamine synthetase adenylyltransferase/adenylyl-removing enzyme">
    <location>
        <begin position="1"/>
        <end position="986"/>
    </location>
</feature>
<feature type="region of interest" description="Adenylyl removase" evidence="1">
    <location>
        <begin position="1"/>
        <end position="470"/>
    </location>
</feature>
<feature type="region of interest" description="Adenylyl transferase" evidence="1">
    <location>
        <begin position="476"/>
        <end position="986"/>
    </location>
</feature>
<comment type="function">
    <text evidence="1">Involved in the regulation of glutamine synthetase GlnA, a key enzyme in the process to assimilate ammonia. When cellular nitrogen levels are high, the C-terminal adenylyl transferase (AT) inactivates GlnA by covalent transfer of an adenylyl group from ATP to specific tyrosine residue of GlnA, thus reducing its activity. Conversely, when nitrogen levels are low, the N-terminal adenylyl removase (AR) activates GlnA by removing the adenylyl group by phosphorolysis, increasing its activity. The regulatory region of GlnE binds the signal transduction protein PII (GlnB) which indicates the nitrogen status of the cell.</text>
</comment>
<comment type="catalytic activity">
    <reaction evidence="1">
        <text>[glutamine synthetase]-O(4)-(5'-adenylyl)-L-tyrosine + phosphate = [glutamine synthetase]-L-tyrosine + ADP</text>
        <dbReference type="Rhea" id="RHEA:43716"/>
        <dbReference type="Rhea" id="RHEA-COMP:10660"/>
        <dbReference type="Rhea" id="RHEA-COMP:10661"/>
        <dbReference type="ChEBI" id="CHEBI:43474"/>
        <dbReference type="ChEBI" id="CHEBI:46858"/>
        <dbReference type="ChEBI" id="CHEBI:83624"/>
        <dbReference type="ChEBI" id="CHEBI:456216"/>
        <dbReference type="EC" id="2.7.7.89"/>
    </reaction>
</comment>
<comment type="catalytic activity">
    <reaction evidence="1">
        <text>[glutamine synthetase]-L-tyrosine + ATP = [glutamine synthetase]-O(4)-(5'-adenylyl)-L-tyrosine + diphosphate</text>
        <dbReference type="Rhea" id="RHEA:18589"/>
        <dbReference type="Rhea" id="RHEA-COMP:10660"/>
        <dbReference type="Rhea" id="RHEA-COMP:10661"/>
        <dbReference type="ChEBI" id="CHEBI:30616"/>
        <dbReference type="ChEBI" id="CHEBI:33019"/>
        <dbReference type="ChEBI" id="CHEBI:46858"/>
        <dbReference type="ChEBI" id="CHEBI:83624"/>
        <dbReference type="EC" id="2.7.7.42"/>
    </reaction>
</comment>
<comment type="cofactor">
    <cofactor evidence="1">
        <name>Mg(2+)</name>
        <dbReference type="ChEBI" id="CHEBI:18420"/>
    </cofactor>
</comment>
<comment type="similarity">
    <text evidence="1">Belongs to the GlnE family.</text>
</comment>
<keyword id="KW-0067">ATP-binding</keyword>
<keyword id="KW-0460">Magnesium</keyword>
<keyword id="KW-0511">Multifunctional enzyme</keyword>
<keyword id="KW-0547">Nucleotide-binding</keyword>
<keyword id="KW-0548">Nucleotidyltransferase</keyword>
<keyword id="KW-0808">Transferase</keyword>
<reference key="1">
    <citation type="journal article" date="2000" name="DNA Res.">
        <title>Complete genome structure of the nitrogen-fixing symbiotic bacterium Mesorhizobium loti.</title>
        <authorList>
            <person name="Kaneko T."/>
            <person name="Nakamura Y."/>
            <person name="Sato S."/>
            <person name="Asamizu E."/>
            <person name="Kato T."/>
            <person name="Sasamoto S."/>
            <person name="Watanabe A."/>
            <person name="Idesawa K."/>
            <person name="Ishikawa A."/>
            <person name="Kawashima K."/>
            <person name="Kimura T."/>
            <person name="Kishida Y."/>
            <person name="Kiyokawa C."/>
            <person name="Kohara M."/>
            <person name="Matsumoto M."/>
            <person name="Matsuno A."/>
            <person name="Mochizuki Y."/>
            <person name="Nakayama S."/>
            <person name="Nakazaki N."/>
            <person name="Shimpo S."/>
            <person name="Sugimoto M."/>
            <person name="Takeuchi C."/>
            <person name="Yamada M."/>
            <person name="Tabata S."/>
        </authorList>
    </citation>
    <scope>NUCLEOTIDE SEQUENCE [LARGE SCALE GENOMIC DNA]</scope>
    <source>
        <strain>LMG 29417 / CECT 9101 / MAFF 303099</strain>
    </source>
</reference>
<organism>
    <name type="scientific">Mesorhizobium japonicum (strain LMG 29417 / CECT 9101 / MAFF 303099)</name>
    <name type="common">Mesorhizobium loti (strain MAFF 303099)</name>
    <dbReference type="NCBI Taxonomy" id="266835"/>
    <lineage>
        <taxon>Bacteria</taxon>
        <taxon>Pseudomonadati</taxon>
        <taxon>Pseudomonadota</taxon>
        <taxon>Alphaproteobacteria</taxon>
        <taxon>Hyphomicrobiales</taxon>
        <taxon>Phyllobacteriaceae</taxon>
        <taxon>Mesorhizobium</taxon>
    </lineage>
</organism>
<proteinExistence type="inferred from homology"/>